<comment type="function">
    <text evidence="1">Catalyzes the stereoinversion of LL-2,6-diaminopimelate (L,L-DAP) to meso-diaminopimelate (meso-DAP), a precursor of L-lysine and an essential component of the bacterial peptidoglycan.</text>
</comment>
<comment type="catalytic activity">
    <reaction evidence="1">
        <text>(2S,6S)-2,6-diaminopimelate = meso-2,6-diaminopimelate</text>
        <dbReference type="Rhea" id="RHEA:15393"/>
        <dbReference type="ChEBI" id="CHEBI:57609"/>
        <dbReference type="ChEBI" id="CHEBI:57791"/>
        <dbReference type="EC" id="5.1.1.7"/>
    </reaction>
</comment>
<comment type="pathway">
    <text evidence="1">Amino-acid biosynthesis; L-lysine biosynthesis via DAP pathway; DL-2,6-diaminopimelate from LL-2,6-diaminopimelate: step 1/1.</text>
</comment>
<comment type="subunit">
    <text evidence="1">Homodimer.</text>
</comment>
<comment type="subcellular location">
    <subcellularLocation>
        <location evidence="1">Cytoplasm</location>
    </subcellularLocation>
</comment>
<comment type="similarity">
    <text evidence="1">Belongs to the diaminopimelate epimerase family.</text>
</comment>
<keyword id="KW-0028">Amino-acid biosynthesis</keyword>
<keyword id="KW-0963">Cytoplasm</keyword>
<keyword id="KW-0413">Isomerase</keyword>
<keyword id="KW-0457">Lysine biosynthesis</keyword>
<keyword id="KW-1185">Reference proteome</keyword>
<organism>
    <name type="scientific">Rhodospirillum centenum (strain ATCC 51521 / SW)</name>
    <dbReference type="NCBI Taxonomy" id="414684"/>
    <lineage>
        <taxon>Bacteria</taxon>
        <taxon>Pseudomonadati</taxon>
        <taxon>Pseudomonadota</taxon>
        <taxon>Alphaproteobacteria</taxon>
        <taxon>Rhodospirillales</taxon>
        <taxon>Rhodospirillaceae</taxon>
        <taxon>Rhodospirillum</taxon>
    </lineage>
</organism>
<sequence length="291" mass="30704">MVRRFLKMHGLGNDFVVLDARRDPLPLTTAAARAIADRHTGVGCDQIVLLEPPRHPAADLFMRILNPDGSESGACGNATRCVASLVADGSGRAEVTVETATGLLRCRLRADGSVTVDMGPARLDWTQIPLAAAHDTLRVPAGAGPLQDACCVGMGNPHAVFFVDDAEAVDLATLGPVLEHHSLFPQRCNIEVAQVLAPDHIRMRVWERGAGITRACGSGSCATLVAAARRGLTGRAAWIELDGGRLWIEWHGDGHVLMTGPVATAFTGELSETLLPGSLPSETPLPETVPA</sequence>
<feature type="chain" id="PRO_1000124429" description="Diaminopimelate epimerase">
    <location>
        <begin position="1"/>
        <end position="291"/>
    </location>
</feature>
<feature type="active site" description="Proton donor" evidence="1">
    <location>
        <position position="75"/>
    </location>
</feature>
<feature type="active site" description="Proton acceptor" evidence="1">
    <location>
        <position position="216"/>
    </location>
</feature>
<feature type="binding site" evidence="1">
    <location>
        <position position="13"/>
    </location>
    <ligand>
        <name>substrate</name>
    </ligand>
</feature>
<feature type="binding site" evidence="1">
    <location>
        <position position="46"/>
    </location>
    <ligand>
        <name>substrate</name>
    </ligand>
</feature>
<feature type="binding site" evidence="1">
    <location>
        <position position="66"/>
    </location>
    <ligand>
        <name>substrate</name>
    </ligand>
</feature>
<feature type="binding site" evidence="1">
    <location>
        <begin position="76"/>
        <end position="77"/>
    </location>
    <ligand>
        <name>substrate</name>
    </ligand>
</feature>
<feature type="binding site" evidence="1">
    <location>
        <position position="156"/>
    </location>
    <ligand>
        <name>substrate</name>
    </ligand>
</feature>
<feature type="binding site" evidence="1">
    <location>
        <position position="189"/>
    </location>
    <ligand>
        <name>substrate</name>
    </ligand>
</feature>
<feature type="binding site" evidence="1">
    <location>
        <begin position="207"/>
        <end position="208"/>
    </location>
    <ligand>
        <name>substrate</name>
    </ligand>
</feature>
<feature type="binding site" evidence="1">
    <location>
        <begin position="217"/>
        <end position="218"/>
    </location>
    <ligand>
        <name>substrate</name>
    </ligand>
</feature>
<feature type="site" description="Could be important to modulate the pK values of the two catalytic cysteine residues" evidence="1">
    <location>
        <position position="158"/>
    </location>
</feature>
<feature type="site" description="Could be important to modulate the pK values of the two catalytic cysteine residues" evidence="1">
    <location>
        <position position="207"/>
    </location>
</feature>
<name>DAPF_RHOCS</name>
<gene>
    <name evidence="1" type="primary">dapF</name>
    <name type="ordered locus">RC1_2197</name>
</gene>
<reference key="1">
    <citation type="submission" date="2007-03" db="EMBL/GenBank/DDBJ databases">
        <title>Genome sequence of Rhodospirillum centenum.</title>
        <authorList>
            <person name="Touchman J.W."/>
            <person name="Bauer C."/>
            <person name="Blankenship R.E."/>
        </authorList>
    </citation>
    <scope>NUCLEOTIDE SEQUENCE [LARGE SCALE GENOMIC DNA]</scope>
    <source>
        <strain>ATCC 51521 / SW</strain>
    </source>
</reference>
<protein>
    <recommendedName>
        <fullName evidence="1">Diaminopimelate epimerase</fullName>
        <shortName evidence="1">DAP epimerase</shortName>
        <ecNumber evidence="1">5.1.1.7</ecNumber>
    </recommendedName>
    <alternativeName>
        <fullName evidence="1">PLP-independent amino acid racemase</fullName>
    </alternativeName>
</protein>
<evidence type="ECO:0000255" key="1">
    <source>
        <dbReference type="HAMAP-Rule" id="MF_00197"/>
    </source>
</evidence>
<dbReference type="EC" id="5.1.1.7" evidence="1"/>
<dbReference type="EMBL" id="CP000613">
    <property type="protein sequence ID" value="ACI99584.1"/>
    <property type="molecule type" value="Genomic_DNA"/>
</dbReference>
<dbReference type="RefSeq" id="WP_012567369.1">
    <property type="nucleotide sequence ID" value="NC_011420.2"/>
</dbReference>
<dbReference type="SMR" id="B6IP82"/>
<dbReference type="STRING" id="414684.RC1_2197"/>
<dbReference type="KEGG" id="rce:RC1_2197"/>
<dbReference type="eggNOG" id="COG0253">
    <property type="taxonomic scope" value="Bacteria"/>
</dbReference>
<dbReference type="HOGENOM" id="CLU_053306_1_0_5"/>
<dbReference type="OrthoDB" id="9805408at2"/>
<dbReference type="UniPathway" id="UPA00034">
    <property type="reaction ID" value="UER00025"/>
</dbReference>
<dbReference type="Proteomes" id="UP000001591">
    <property type="component" value="Chromosome"/>
</dbReference>
<dbReference type="GO" id="GO:0005829">
    <property type="term" value="C:cytosol"/>
    <property type="evidence" value="ECO:0007669"/>
    <property type="project" value="TreeGrafter"/>
</dbReference>
<dbReference type="GO" id="GO:0008837">
    <property type="term" value="F:diaminopimelate epimerase activity"/>
    <property type="evidence" value="ECO:0007669"/>
    <property type="project" value="UniProtKB-UniRule"/>
</dbReference>
<dbReference type="GO" id="GO:0009089">
    <property type="term" value="P:lysine biosynthetic process via diaminopimelate"/>
    <property type="evidence" value="ECO:0007669"/>
    <property type="project" value="UniProtKB-UniRule"/>
</dbReference>
<dbReference type="Gene3D" id="3.10.310.10">
    <property type="entry name" value="Diaminopimelate Epimerase, Chain A, domain 1"/>
    <property type="match status" value="2"/>
</dbReference>
<dbReference type="HAMAP" id="MF_00197">
    <property type="entry name" value="DAP_epimerase"/>
    <property type="match status" value="1"/>
</dbReference>
<dbReference type="InterPro" id="IPR018510">
    <property type="entry name" value="DAP_epimerase_AS"/>
</dbReference>
<dbReference type="InterPro" id="IPR001653">
    <property type="entry name" value="DAP_epimerase_DapF"/>
</dbReference>
<dbReference type="NCBIfam" id="TIGR00652">
    <property type="entry name" value="DapF"/>
    <property type="match status" value="1"/>
</dbReference>
<dbReference type="PANTHER" id="PTHR31689:SF0">
    <property type="entry name" value="DIAMINOPIMELATE EPIMERASE"/>
    <property type="match status" value="1"/>
</dbReference>
<dbReference type="PANTHER" id="PTHR31689">
    <property type="entry name" value="DIAMINOPIMELATE EPIMERASE, CHLOROPLASTIC"/>
    <property type="match status" value="1"/>
</dbReference>
<dbReference type="Pfam" id="PF01678">
    <property type="entry name" value="DAP_epimerase"/>
    <property type="match status" value="2"/>
</dbReference>
<dbReference type="SUPFAM" id="SSF54506">
    <property type="entry name" value="Diaminopimelate epimerase-like"/>
    <property type="match status" value="1"/>
</dbReference>
<dbReference type="PROSITE" id="PS01326">
    <property type="entry name" value="DAP_EPIMERASE"/>
    <property type="match status" value="1"/>
</dbReference>
<accession>B6IP82</accession>
<proteinExistence type="inferred from homology"/>